<gene>
    <name evidence="1" type="primary">rpmC</name>
    <name type="ordered locus">FTN_0247</name>
</gene>
<accession>A0Q4J1</accession>
<proteinExistence type="inferred from homology"/>
<comment type="similarity">
    <text evidence="1">Belongs to the universal ribosomal protein uL29 family.</text>
</comment>
<keyword id="KW-0687">Ribonucleoprotein</keyword>
<keyword id="KW-0689">Ribosomal protein</keyword>
<evidence type="ECO:0000255" key="1">
    <source>
        <dbReference type="HAMAP-Rule" id="MF_00374"/>
    </source>
</evidence>
<evidence type="ECO:0000305" key="2"/>
<organism>
    <name type="scientific">Francisella tularensis subsp. novicida (strain U112)</name>
    <dbReference type="NCBI Taxonomy" id="401614"/>
    <lineage>
        <taxon>Bacteria</taxon>
        <taxon>Pseudomonadati</taxon>
        <taxon>Pseudomonadota</taxon>
        <taxon>Gammaproteobacteria</taxon>
        <taxon>Thiotrichales</taxon>
        <taxon>Francisellaceae</taxon>
        <taxon>Francisella</taxon>
    </lineage>
</organism>
<protein>
    <recommendedName>
        <fullName evidence="1">Large ribosomal subunit protein uL29</fullName>
    </recommendedName>
    <alternativeName>
        <fullName evidence="2">50S ribosomal protein L29</fullName>
    </alternativeName>
</protein>
<dbReference type="EMBL" id="CP000439">
    <property type="protein sequence ID" value="ABK89156.1"/>
    <property type="molecule type" value="Genomic_DNA"/>
</dbReference>
<dbReference type="RefSeq" id="WP_003017801.1">
    <property type="nucleotide sequence ID" value="NZ_CP009633.1"/>
</dbReference>
<dbReference type="SMR" id="A0Q4J1"/>
<dbReference type="GeneID" id="75264253"/>
<dbReference type="KEGG" id="ftn:FTN_0247"/>
<dbReference type="KEGG" id="ftx:AW25_1795"/>
<dbReference type="BioCyc" id="FTUL401614:G1G75-258-MONOMER"/>
<dbReference type="Proteomes" id="UP000000762">
    <property type="component" value="Chromosome"/>
</dbReference>
<dbReference type="GO" id="GO:0022625">
    <property type="term" value="C:cytosolic large ribosomal subunit"/>
    <property type="evidence" value="ECO:0007669"/>
    <property type="project" value="TreeGrafter"/>
</dbReference>
<dbReference type="GO" id="GO:0003735">
    <property type="term" value="F:structural constituent of ribosome"/>
    <property type="evidence" value="ECO:0007669"/>
    <property type="project" value="InterPro"/>
</dbReference>
<dbReference type="GO" id="GO:0006412">
    <property type="term" value="P:translation"/>
    <property type="evidence" value="ECO:0007669"/>
    <property type="project" value="UniProtKB-UniRule"/>
</dbReference>
<dbReference type="CDD" id="cd00427">
    <property type="entry name" value="Ribosomal_L29_HIP"/>
    <property type="match status" value="1"/>
</dbReference>
<dbReference type="Gene3D" id="6.10.140.1970">
    <property type="match status" value="1"/>
</dbReference>
<dbReference type="HAMAP" id="MF_00374">
    <property type="entry name" value="Ribosomal_uL29"/>
    <property type="match status" value="1"/>
</dbReference>
<dbReference type="InterPro" id="IPR050063">
    <property type="entry name" value="Ribosomal_protein_uL29"/>
</dbReference>
<dbReference type="InterPro" id="IPR001854">
    <property type="entry name" value="Ribosomal_uL29"/>
</dbReference>
<dbReference type="InterPro" id="IPR018254">
    <property type="entry name" value="Ribosomal_uL29_CS"/>
</dbReference>
<dbReference type="InterPro" id="IPR036049">
    <property type="entry name" value="Ribosomal_uL29_sf"/>
</dbReference>
<dbReference type="NCBIfam" id="TIGR00012">
    <property type="entry name" value="L29"/>
    <property type="match status" value="1"/>
</dbReference>
<dbReference type="PANTHER" id="PTHR10916">
    <property type="entry name" value="60S RIBOSOMAL PROTEIN L35/50S RIBOSOMAL PROTEIN L29"/>
    <property type="match status" value="1"/>
</dbReference>
<dbReference type="PANTHER" id="PTHR10916:SF0">
    <property type="entry name" value="LARGE RIBOSOMAL SUBUNIT PROTEIN UL29C"/>
    <property type="match status" value="1"/>
</dbReference>
<dbReference type="Pfam" id="PF00831">
    <property type="entry name" value="Ribosomal_L29"/>
    <property type="match status" value="1"/>
</dbReference>
<dbReference type="SUPFAM" id="SSF46561">
    <property type="entry name" value="Ribosomal protein L29 (L29p)"/>
    <property type="match status" value="1"/>
</dbReference>
<dbReference type="PROSITE" id="PS00579">
    <property type="entry name" value="RIBOSOMAL_L29"/>
    <property type="match status" value="1"/>
</dbReference>
<reference key="1">
    <citation type="journal article" date="2007" name="Genome Biol.">
        <title>Comparison of Francisella tularensis genomes reveals evolutionary events associated with the emergence of human pathogenic strains.</title>
        <authorList>
            <person name="Rohmer L."/>
            <person name="Fong C."/>
            <person name="Abmayr S."/>
            <person name="Wasnick M."/>
            <person name="Larson Freeman T.J."/>
            <person name="Radey M."/>
            <person name="Guina T."/>
            <person name="Svensson K."/>
            <person name="Hayden H.S."/>
            <person name="Jacobs M."/>
            <person name="Gallagher L.A."/>
            <person name="Manoil C."/>
            <person name="Ernst R.K."/>
            <person name="Drees B."/>
            <person name="Buckley D."/>
            <person name="Haugen E."/>
            <person name="Bovee D."/>
            <person name="Zhou Y."/>
            <person name="Chang J."/>
            <person name="Levy R."/>
            <person name="Lim R."/>
            <person name="Gillett W."/>
            <person name="Guenthener D."/>
            <person name="Kang A."/>
            <person name="Shaffer S.A."/>
            <person name="Taylor G."/>
            <person name="Chen J."/>
            <person name="Gallis B."/>
            <person name="D'Argenio D.A."/>
            <person name="Forsman M."/>
            <person name="Olson M.V."/>
            <person name="Goodlett D.R."/>
            <person name="Kaul R."/>
            <person name="Miller S.I."/>
            <person name="Brittnacher M.J."/>
        </authorList>
    </citation>
    <scope>NUCLEOTIDE SEQUENCE [LARGE SCALE GENOMIC DNA]</scope>
    <source>
        <strain>U112</strain>
    </source>
</reference>
<feature type="chain" id="PRO_1000007486" description="Large ribosomal subunit protein uL29">
    <location>
        <begin position="1"/>
        <end position="66"/>
    </location>
</feature>
<sequence>MKRKDTLKDYRGKSIDQLQEAKIELLQQLFSLRMQKGTGQLKKNHLFKSAKRDIARINTIISEKNK</sequence>
<name>RL29_FRATN</name>